<dbReference type="EMBL" id="BC089393">
    <property type="protein sequence ID" value="AAH89393.1"/>
    <property type="molecule type" value="mRNA"/>
</dbReference>
<dbReference type="CCDS" id="CCDS34093.1"/>
<dbReference type="RefSeq" id="NP_001012414.1">
    <property type="nucleotide sequence ID" value="NM_001012414.3"/>
</dbReference>
<dbReference type="SMR" id="Q5EBN2"/>
<dbReference type="BioGRID" id="134027">
    <property type="interactions" value="11"/>
</dbReference>
<dbReference type="FunCoup" id="Q5EBN2">
    <property type="interactions" value="239"/>
</dbReference>
<dbReference type="IntAct" id="Q5EBN2">
    <property type="interactions" value="1"/>
</dbReference>
<dbReference type="STRING" id="9606.ENSP00000332288"/>
<dbReference type="GlyGen" id="Q5EBN2">
    <property type="glycosylation" value="1 site, 1 O-linked glycan (1 site)"/>
</dbReference>
<dbReference type="BioMuta" id="TRIM61"/>
<dbReference type="DMDM" id="74741447"/>
<dbReference type="jPOST" id="Q5EBN2"/>
<dbReference type="PaxDb" id="9606-ENSP00000332288"/>
<dbReference type="PeptideAtlas" id="Q5EBN2"/>
<dbReference type="Antibodypedia" id="28285">
    <property type="antibodies" value="49 antibodies from 7 providers"/>
</dbReference>
<dbReference type="DNASU" id="391712"/>
<dbReference type="Ensembl" id="ENST00000329314.6">
    <property type="protein sequence ID" value="ENSP00000332288.5"/>
    <property type="gene ID" value="ENSG00000183439.10"/>
</dbReference>
<dbReference type="GeneID" id="391712"/>
<dbReference type="KEGG" id="hsa:391712"/>
<dbReference type="UCSC" id="uc003iqw.4">
    <property type="organism name" value="human"/>
</dbReference>
<dbReference type="AGR" id="HGNC:24339"/>
<dbReference type="CTD" id="391712"/>
<dbReference type="GeneCards" id="TRIM61"/>
<dbReference type="HGNC" id="HGNC:24339">
    <property type="gene designation" value="TRIM61"/>
</dbReference>
<dbReference type="HPA" id="ENSG00000183439">
    <property type="expression patterns" value="Low tissue specificity"/>
</dbReference>
<dbReference type="MIM" id="619417">
    <property type="type" value="gene"/>
</dbReference>
<dbReference type="neXtProt" id="NX_Q5EBN2"/>
<dbReference type="OpenTargets" id="ENSG00000183439"/>
<dbReference type="PharmGKB" id="PA134868214"/>
<dbReference type="VEuPathDB" id="HostDB:ENSG00000183439"/>
<dbReference type="eggNOG" id="KOG2177">
    <property type="taxonomic scope" value="Eukaryota"/>
</dbReference>
<dbReference type="GeneTree" id="ENSGT00940000155329"/>
<dbReference type="HOGENOM" id="CLU_013137_6_4_1"/>
<dbReference type="InParanoid" id="Q5EBN2"/>
<dbReference type="OrthoDB" id="654191at2759"/>
<dbReference type="PAN-GO" id="Q5EBN2">
    <property type="GO annotations" value="5 GO annotations based on evolutionary models"/>
</dbReference>
<dbReference type="PhylomeDB" id="Q5EBN2"/>
<dbReference type="PathwayCommons" id="Q5EBN2"/>
<dbReference type="SignaLink" id="Q5EBN2"/>
<dbReference type="SIGNOR" id="Q5EBN2"/>
<dbReference type="BioGRID-ORCS" id="391712">
    <property type="hits" value="55 hits in 1138 CRISPR screens"/>
</dbReference>
<dbReference type="ChiTaRS" id="TRIM61">
    <property type="organism name" value="human"/>
</dbReference>
<dbReference type="GenomeRNAi" id="391712"/>
<dbReference type="Pharos" id="Q5EBN2">
    <property type="development level" value="Tdark"/>
</dbReference>
<dbReference type="PRO" id="PR:Q5EBN2"/>
<dbReference type="Proteomes" id="UP000005640">
    <property type="component" value="Chromosome 4"/>
</dbReference>
<dbReference type="RNAct" id="Q5EBN2">
    <property type="molecule type" value="protein"/>
</dbReference>
<dbReference type="Bgee" id="ENSG00000183439">
    <property type="expression patterns" value="Expressed in secondary oocyte and 136 other cell types or tissues"/>
</dbReference>
<dbReference type="ExpressionAtlas" id="Q5EBN2">
    <property type="expression patterns" value="baseline and differential"/>
</dbReference>
<dbReference type="GO" id="GO:0005737">
    <property type="term" value="C:cytoplasm"/>
    <property type="evidence" value="ECO:0000318"/>
    <property type="project" value="GO_Central"/>
</dbReference>
<dbReference type="GO" id="GO:0061630">
    <property type="term" value="F:ubiquitin protein ligase activity"/>
    <property type="evidence" value="ECO:0000318"/>
    <property type="project" value="GO_Central"/>
</dbReference>
<dbReference type="GO" id="GO:0008270">
    <property type="term" value="F:zinc ion binding"/>
    <property type="evidence" value="ECO:0007669"/>
    <property type="project" value="UniProtKB-KW"/>
</dbReference>
<dbReference type="GO" id="GO:0045087">
    <property type="term" value="P:innate immune response"/>
    <property type="evidence" value="ECO:0000318"/>
    <property type="project" value="GO_Central"/>
</dbReference>
<dbReference type="GO" id="GO:0010468">
    <property type="term" value="P:regulation of gene expression"/>
    <property type="evidence" value="ECO:0000318"/>
    <property type="project" value="GO_Central"/>
</dbReference>
<dbReference type="CDD" id="cd16607">
    <property type="entry name" value="RING-HC_TRIM60-like_C-IV"/>
    <property type="match status" value="1"/>
</dbReference>
<dbReference type="Gene3D" id="3.30.160.60">
    <property type="entry name" value="Classic Zinc Finger"/>
    <property type="match status" value="1"/>
</dbReference>
<dbReference type="Gene3D" id="3.30.40.10">
    <property type="entry name" value="Zinc/RING finger domain, C3HC4 (zinc finger)"/>
    <property type="match status" value="1"/>
</dbReference>
<dbReference type="InterPro" id="IPR050143">
    <property type="entry name" value="TRIM/RBCC"/>
</dbReference>
<dbReference type="InterPro" id="IPR000315">
    <property type="entry name" value="Znf_B-box"/>
</dbReference>
<dbReference type="InterPro" id="IPR001841">
    <property type="entry name" value="Znf_RING"/>
</dbReference>
<dbReference type="InterPro" id="IPR013083">
    <property type="entry name" value="Znf_RING/FYVE/PHD"/>
</dbReference>
<dbReference type="InterPro" id="IPR017907">
    <property type="entry name" value="Znf_RING_CS"/>
</dbReference>
<dbReference type="PANTHER" id="PTHR24103">
    <property type="entry name" value="E3 UBIQUITIN-PROTEIN LIGASE TRIM"/>
    <property type="match status" value="1"/>
</dbReference>
<dbReference type="Pfam" id="PF00643">
    <property type="entry name" value="zf-B_box"/>
    <property type="match status" value="1"/>
</dbReference>
<dbReference type="Pfam" id="PF15227">
    <property type="entry name" value="zf-C3HC4_4"/>
    <property type="match status" value="1"/>
</dbReference>
<dbReference type="SMART" id="SM00184">
    <property type="entry name" value="RING"/>
    <property type="match status" value="1"/>
</dbReference>
<dbReference type="SUPFAM" id="SSF57845">
    <property type="entry name" value="B-box zinc-binding domain"/>
    <property type="match status" value="1"/>
</dbReference>
<dbReference type="SUPFAM" id="SSF57850">
    <property type="entry name" value="RING/U-box"/>
    <property type="match status" value="1"/>
</dbReference>
<dbReference type="PROSITE" id="PS50119">
    <property type="entry name" value="ZF_BBOX"/>
    <property type="match status" value="1"/>
</dbReference>
<dbReference type="PROSITE" id="PS00518">
    <property type="entry name" value="ZF_RING_1"/>
    <property type="match status" value="1"/>
</dbReference>
<dbReference type="PROSITE" id="PS50089">
    <property type="entry name" value="ZF_RING_2"/>
    <property type="match status" value="1"/>
</dbReference>
<proteinExistence type="evidence at transcript level"/>
<organism>
    <name type="scientific">Homo sapiens</name>
    <name type="common">Human</name>
    <dbReference type="NCBI Taxonomy" id="9606"/>
    <lineage>
        <taxon>Eukaryota</taxon>
        <taxon>Metazoa</taxon>
        <taxon>Chordata</taxon>
        <taxon>Craniata</taxon>
        <taxon>Vertebrata</taxon>
        <taxon>Euteleostomi</taxon>
        <taxon>Mammalia</taxon>
        <taxon>Eutheria</taxon>
        <taxon>Euarchontoglires</taxon>
        <taxon>Primates</taxon>
        <taxon>Haplorrhini</taxon>
        <taxon>Catarrhini</taxon>
        <taxon>Hominidae</taxon>
        <taxon>Homo</taxon>
    </lineage>
</organism>
<name>TRI61_HUMAN</name>
<protein>
    <recommendedName>
        <fullName>Putative tripartite motif-containing protein 61</fullName>
    </recommendedName>
    <alternativeName>
        <fullName>RING finger protein 35</fullName>
    </alternativeName>
</protein>
<sequence>MEFVTALADLRAEASCPICLDYLKDPVTISCGHNFCLSCIIMSWKDLHDSFPCPFCHFCCPERKFISNPQLGSLTEIAKQLQIRSKKRKRQEEKHVCKKHNQVLTFFCQKDLELLCPRCSLSTDHQHHCVWPIKKAASYHRKKLEEYNAPWKERVELIEKVITMQTRKSLELKKKMESPSVTRLECSCTISAHFNLRLPGSSDSSASGS</sequence>
<accession>Q5EBN2</accession>
<keyword id="KW-0479">Metal-binding</keyword>
<keyword id="KW-1185">Reference proteome</keyword>
<keyword id="KW-0862">Zinc</keyword>
<keyword id="KW-0863">Zinc-finger</keyword>
<reference key="1">
    <citation type="journal article" date="2004" name="Genome Res.">
        <title>The status, quality, and expansion of the NIH full-length cDNA project: the Mammalian Gene Collection (MGC).</title>
        <authorList>
            <consortium name="The MGC Project Team"/>
        </authorList>
    </citation>
    <scope>NUCLEOTIDE SEQUENCE [LARGE SCALE MRNA]</scope>
    <source>
        <tissue>Testis</tissue>
    </source>
</reference>
<gene>
    <name type="primary">TRIM61</name>
    <name type="synonym">RNF35</name>
</gene>
<feature type="chain" id="PRO_0000272303" description="Putative tripartite motif-containing protein 61">
    <location>
        <begin position="1"/>
        <end position="209"/>
    </location>
</feature>
<feature type="zinc finger region" description="RING-type" evidence="2">
    <location>
        <begin position="16"/>
        <end position="57"/>
    </location>
</feature>
<feature type="zinc finger region" description="B box-type" evidence="1">
    <location>
        <begin position="92"/>
        <end position="133"/>
    </location>
</feature>
<feature type="binding site" evidence="1">
    <location>
        <position position="97"/>
    </location>
    <ligand>
        <name>Zn(2+)</name>
        <dbReference type="ChEBI" id="CHEBI:29105"/>
    </ligand>
</feature>
<feature type="binding site" evidence="1">
    <location>
        <position position="100"/>
    </location>
    <ligand>
        <name>Zn(2+)</name>
        <dbReference type="ChEBI" id="CHEBI:29105"/>
    </ligand>
</feature>
<feature type="binding site" evidence="1">
    <location>
        <position position="119"/>
    </location>
    <ligand>
        <name>Zn(2+)</name>
        <dbReference type="ChEBI" id="CHEBI:29105"/>
    </ligand>
</feature>
<feature type="binding site" evidence="1">
    <location>
        <position position="125"/>
    </location>
    <ligand>
        <name>Zn(2+)</name>
        <dbReference type="ChEBI" id="CHEBI:29105"/>
    </ligand>
</feature>
<evidence type="ECO:0000255" key="1">
    <source>
        <dbReference type="PROSITE-ProRule" id="PRU00024"/>
    </source>
</evidence>
<evidence type="ECO:0000255" key="2">
    <source>
        <dbReference type="PROSITE-ProRule" id="PRU00175"/>
    </source>
</evidence>